<sequence length="328" mass="34334">MAANIAAAAAAAQEVDPVLKKAIKLLHSSNPTSAAELRLLLDEALKARFGPEKSLTNNMTPRMLEDEANFSGRAATPPQQPINADEIINLTNSPDKEPSDSVDTIADSDDGLSAVGIVNTGDTGDFGDLNCCVCGEMVFTATNRLIECSKCGAMYHQECHKPPITKEEAADDQEQNWQCDTCCNKPTSSGRTTSSAAAVTPTVFIADEPMPLTSKAKSSVASSRSSNSSNSSSPFYRPEPSSSTNASSSSSSKHGHKSSSSSSSKSHKEERSSKSTAASSLSAIGGMEKHNSSGTSSRRSGSSTKSSSKSSSSKHHESGSSSKRRSKQ</sequence>
<organism evidence="15">
    <name type="scientific">Drosophila melanogaster</name>
    <name type="common">Fruit fly</name>
    <dbReference type="NCBI Taxonomy" id="7227"/>
    <lineage>
        <taxon>Eukaryota</taxon>
        <taxon>Metazoa</taxon>
        <taxon>Ecdysozoa</taxon>
        <taxon>Arthropoda</taxon>
        <taxon>Hexapoda</taxon>
        <taxon>Insecta</taxon>
        <taxon>Pterygota</taxon>
        <taxon>Neoptera</taxon>
        <taxon>Endopterygota</taxon>
        <taxon>Diptera</taxon>
        <taxon>Brachycera</taxon>
        <taxon>Muscomorpha</taxon>
        <taxon>Ephydroidea</taxon>
        <taxon>Drosophilidae</taxon>
        <taxon>Drosophila</taxon>
        <taxon>Sophophora</taxon>
    </lineage>
</organism>
<comment type="function">
    <text evidence="3 4 5 7">Component of the integrator complex, a multiprotein complex that terminates RNA polymerase II (Pol II) transcription in the promoter-proximal region of genes (PubMed:21078872, PubMed:23097424, PubMed:23288851, PubMed:32966759). The integrator complex provides a quality checkpoint during transcription elongation by driving premature transcription termination of transcripts that are unfavorably configured for transcriptional elongation: the complex terminates transcription by (1) catalyzing dephosphorylation of the C-terminal domain (CTD) of Pol II subunit Polr2A/Rbp1 and Spt5, and (2) degrading the exiting nascent RNA transcript via endonuclease activity (PubMed:32966759). The integrator complex is also involved in the 3'-end processing of the U7 snRNA, and also the spliceosomal snRNAs U1, U2, U4 and U5 (PubMed:21078872, PubMed:23097424, PubMed:23288851). Required for the normal expression of the Integrator complex component IntS1 (PubMed:23288851).</text>
</comment>
<comment type="subunit">
    <text evidence="4 5 6 7 8 9">Belongs to the multiprotein complex Integrator, at least composed of IntS1, IntS2, IntS3, IntS4, omd/IntS5, IntS6, defl/IntS7, IntS8, IntS9, IntS10, IntS11, IntS12, asun/IntS13, IntS14 and IntS15 (PubMed:23097424, PubMed:31530651, PubMed:32966759, PubMed:37995689, PubMed:39032490). The core complex associates with protein phosphatase 2A subunits mts/PP2A and Pp2A-29B, to form the Integrator-PP2A (INTAC) complex (PubMed:32966759, PubMed:37995689). Within the complex, interacts with IntS1 and IntS9 (PubMed:23288851). Interaction with IntS1 is likely to be important for promoting 3'-end processing of snRNAs (PubMed:23288851).</text>
</comment>
<comment type="subcellular location">
    <subcellularLocation>
        <location evidence="5 9">Nucleus</location>
    </subcellularLocation>
</comment>
<comment type="domain">
    <text evidence="5">The PHD-type zinc finger is not required for 3'-end snRNA processing.</text>
</comment>
<comment type="similarity">
    <text evidence="12">Belongs to the Integrator subunit 12 family.</text>
</comment>
<keyword id="KW-0479">Metal-binding</keyword>
<keyword id="KW-0539">Nucleus</keyword>
<keyword id="KW-1185">Reference proteome</keyword>
<keyword id="KW-0862">Zinc</keyword>
<keyword id="KW-0863">Zinc-finger</keyword>
<dbReference type="EMBL" id="AE014297">
    <property type="protein sequence ID" value="AAF56629.1"/>
    <property type="molecule type" value="Genomic_DNA"/>
</dbReference>
<dbReference type="EMBL" id="AY070574">
    <property type="protein sequence ID" value="AAL48045.1"/>
    <property type="molecule type" value="mRNA"/>
</dbReference>
<dbReference type="RefSeq" id="NP_651507.1">
    <property type="nucleotide sequence ID" value="NM_143250.3"/>
</dbReference>
<dbReference type="SMR" id="Q9VBB3"/>
<dbReference type="FunCoup" id="Q9VBB3">
    <property type="interactions" value="505"/>
</dbReference>
<dbReference type="IntAct" id="Q9VBB3">
    <property type="interactions" value="4"/>
</dbReference>
<dbReference type="STRING" id="7227.FBpp0084433"/>
<dbReference type="GlyGen" id="Q9VBB3">
    <property type="glycosylation" value="1 site"/>
</dbReference>
<dbReference type="PaxDb" id="7227-FBpp0084433"/>
<dbReference type="DNASU" id="43227"/>
<dbReference type="EnsemblMetazoa" id="FBtr0085061">
    <property type="protein sequence ID" value="FBpp0084433"/>
    <property type="gene ID" value="FBgn0039459"/>
</dbReference>
<dbReference type="GeneID" id="43227"/>
<dbReference type="KEGG" id="dme:Dmel_CG5491"/>
<dbReference type="UCSC" id="CG5491-RA">
    <property type="organism name" value="d. melanogaster"/>
</dbReference>
<dbReference type="AGR" id="FB:FBgn0039459"/>
<dbReference type="CTD" id="57117"/>
<dbReference type="FlyBase" id="FBgn0039459">
    <property type="gene designation" value="IntS12"/>
</dbReference>
<dbReference type="VEuPathDB" id="VectorBase:FBgn0039459"/>
<dbReference type="eggNOG" id="KOG4323">
    <property type="taxonomic scope" value="Eukaryota"/>
</dbReference>
<dbReference type="GeneTree" id="ENSGT00390000005218"/>
<dbReference type="HOGENOM" id="CLU_837488_0_0_1"/>
<dbReference type="InParanoid" id="Q9VBB3"/>
<dbReference type="OMA" id="KMISKNM"/>
<dbReference type="OrthoDB" id="5846437at2759"/>
<dbReference type="PhylomeDB" id="Q9VBB3"/>
<dbReference type="Reactome" id="R-DME-6807505">
    <property type="pathway name" value="RNA polymerase II transcribes snRNA genes"/>
</dbReference>
<dbReference type="BioGRID-ORCS" id="43227">
    <property type="hits" value="0 hits in 1 CRISPR screen"/>
</dbReference>
<dbReference type="GenomeRNAi" id="43227"/>
<dbReference type="PRO" id="PR:Q9VBB3"/>
<dbReference type="Proteomes" id="UP000000803">
    <property type="component" value="Chromosome 3R"/>
</dbReference>
<dbReference type="Bgee" id="FBgn0039459">
    <property type="expression patterns" value="Expressed in adult Malpighian tubule principal cell of lower ureter in Malpighian tubule and 44 other cell types or tissues"/>
</dbReference>
<dbReference type="GO" id="GO:0005829">
    <property type="term" value="C:cytosol"/>
    <property type="evidence" value="ECO:0000314"/>
    <property type="project" value="FlyBase"/>
</dbReference>
<dbReference type="GO" id="GO:0160232">
    <property type="term" value="C:INTAC complex"/>
    <property type="evidence" value="ECO:0000314"/>
    <property type="project" value="UniProtKB"/>
</dbReference>
<dbReference type="GO" id="GO:0032039">
    <property type="term" value="C:integrator complex"/>
    <property type="evidence" value="ECO:0000314"/>
    <property type="project" value="UniProtKB"/>
</dbReference>
<dbReference type="GO" id="GO:0005634">
    <property type="term" value="C:nucleus"/>
    <property type="evidence" value="ECO:0000314"/>
    <property type="project" value="FlyBase"/>
</dbReference>
<dbReference type="GO" id="GO:0008270">
    <property type="term" value="F:zinc ion binding"/>
    <property type="evidence" value="ECO:0007669"/>
    <property type="project" value="UniProtKB-KW"/>
</dbReference>
<dbReference type="GO" id="GO:0160240">
    <property type="term" value="P:RNA polymerase II transcription initiation surveillance"/>
    <property type="evidence" value="ECO:0000314"/>
    <property type="project" value="UniProtKB"/>
</dbReference>
<dbReference type="GO" id="GO:0034472">
    <property type="term" value="P:snRNA 3'-end processing"/>
    <property type="evidence" value="ECO:0000314"/>
    <property type="project" value="FlyBase"/>
</dbReference>
<dbReference type="GO" id="GO:0016180">
    <property type="term" value="P:snRNA processing"/>
    <property type="evidence" value="ECO:0000250"/>
    <property type="project" value="FlyBase"/>
</dbReference>
<dbReference type="CDD" id="cd15501">
    <property type="entry name" value="PHD_Int12"/>
    <property type="match status" value="1"/>
</dbReference>
<dbReference type="FunFam" id="3.30.40.10:FF:000101">
    <property type="entry name" value="Integrator complex subunit 12"/>
    <property type="match status" value="1"/>
</dbReference>
<dbReference type="Gene3D" id="3.30.40.10">
    <property type="entry name" value="Zinc/RING finger domain, C3HC4 (zinc finger)"/>
    <property type="match status" value="1"/>
</dbReference>
<dbReference type="InterPro" id="IPR039054">
    <property type="entry name" value="Int12_PHD"/>
</dbReference>
<dbReference type="InterPro" id="IPR051776">
    <property type="entry name" value="Integrator_subunit_12"/>
</dbReference>
<dbReference type="InterPro" id="IPR019786">
    <property type="entry name" value="Zinc_finger_PHD-type_CS"/>
</dbReference>
<dbReference type="InterPro" id="IPR011011">
    <property type="entry name" value="Znf_FYVE_PHD"/>
</dbReference>
<dbReference type="InterPro" id="IPR001965">
    <property type="entry name" value="Znf_PHD"/>
</dbReference>
<dbReference type="InterPro" id="IPR019787">
    <property type="entry name" value="Znf_PHD-finger"/>
</dbReference>
<dbReference type="InterPro" id="IPR013083">
    <property type="entry name" value="Znf_RING/FYVE/PHD"/>
</dbReference>
<dbReference type="PANTHER" id="PTHR13415:SF2">
    <property type="entry name" value="INTEGRATOR COMPLEX SUBUNIT 12"/>
    <property type="match status" value="1"/>
</dbReference>
<dbReference type="PANTHER" id="PTHR13415">
    <property type="entry name" value="NUCLEAR FACTOR-RELATED"/>
    <property type="match status" value="1"/>
</dbReference>
<dbReference type="Pfam" id="PF00628">
    <property type="entry name" value="PHD"/>
    <property type="match status" value="1"/>
</dbReference>
<dbReference type="SMART" id="SM00249">
    <property type="entry name" value="PHD"/>
    <property type="match status" value="1"/>
</dbReference>
<dbReference type="SUPFAM" id="SSF57903">
    <property type="entry name" value="FYVE/PHD zinc finger"/>
    <property type="match status" value="1"/>
</dbReference>
<dbReference type="PROSITE" id="PS01359">
    <property type="entry name" value="ZF_PHD_1"/>
    <property type="match status" value="1"/>
</dbReference>
<dbReference type="PROSITE" id="PS50016">
    <property type="entry name" value="ZF_PHD_2"/>
    <property type="match status" value="1"/>
</dbReference>
<gene>
    <name evidence="11 14" type="primary">IntS12</name>
    <name evidence="14" type="ORF">CG5491</name>
</gene>
<feature type="chain" id="PRO_0000437663" description="Integrator complex subunit 12">
    <location>
        <begin position="1"/>
        <end position="328"/>
    </location>
</feature>
<feature type="zinc finger region" description="PHD-type" evidence="1">
    <location>
        <begin position="128"/>
        <end position="185"/>
    </location>
</feature>
<feature type="region of interest" description="Sufficient for binding to IntS1 and IntS9 and for 3'-end snRNA processing" evidence="5">
    <location>
        <begin position="1"/>
        <end position="45"/>
    </location>
</feature>
<feature type="region of interest" description="Disordered" evidence="2">
    <location>
        <begin position="215"/>
        <end position="328"/>
    </location>
</feature>
<feature type="compositionally biased region" description="Low complexity" evidence="2">
    <location>
        <begin position="215"/>
        <end position="233"/>
    </location>
</feature>
<feature type="compositionally biased region" description="Low complexity" evidence="2">
    <location>
        <begin position="241"/>
        <end position="264"/>
    </location>
</feature>
<feature type="compositionally biased region" description="Low complexity" evidence="2">
    <location>
        <begin position="274"/>
        <end position="283"/>
    </location>
</feature>
<feature type="compositionally biased region" description="Low complexity" evidence="2">
    <location>
        <begin position="292"/>
        <end position="311"/>
    </location>
</feature>
<accession>Q9VBB3</accession>
<evidence type="ECO:0000255" key="1">
    <source>
        <dbReference type="PROSITE-ProRule" id="PRU00146"/>
    </source>
</evidence>
<evidence type="ECO:0000256" key="2">
    <source>
        <dbReference type="SAM" id="MobiDB-lite"/>
    </source>
</evidence>
<evidence type="ECO:0000269" key="3">
    <source>
    </source>
</evidence>
<evidence type="ECO:0000269" key="4">
    <source>
    </source>
</evidence>
<evidence type="ECO:0000269" key="5">
    <source>
    </source>
</evidence>
<evidence type="ECO:0000269" key="6">
    <source>
    </source>
</evidence>
<evidence type="ECO:0000269" key="7">
    <source>
    </source>
</evidence>
<evidence type="ECO:0000269" key="8">
    <source>
    </source>
</evidence>
<evidence type="ECO:0000269" key="9">
    <source>
    </source>
</evidence>
<evidence type="ECO:0000303" key="10">
    <source>
    </source>
</evidence>
<evidence type="ECO:0000303" key="11">
    <source>
    </source>
</evidence>
<evidence type="ECO:0000305" key="12"/>
<evidence type="ECO:0000312" key="13">
    <source>
        <dbReference type="EMBL" id="AAL48045.1"/>
    </source>
</evidence>
<evidence type="ECO:0000312" key="14">
    <source>
        <dbReference type="FlyBase" id="FBgn0039459"/>
    </source>
</evidence>
<evidence type="ECO:0000312" key="15">
    <source>
        <dbReference type="Proteomes" id="UP000000803"/>
    </source>
</evidence>
<reference evidence="15" key="1">
    <citation type="journal article" date="2000" name="Science">
        <title>The genome sequence of Drosophila melanogaster.</title>
        <authorList>
            <person name="Adams M.D."/>
            <person name="Celniker S.E."/>
            <person name="Holt R.A."/>
            <person name="Evans C.A."/>
            <person name="Gocayne J.D."/>
            <person name="Amanatides P.G."/>
            <person name="Scherer S.E."/>
            <person name="Li P.W."/>
            <person name="Hoskins R.A."/>
            <person name="Galle R.F."/>
            <person name="George R.A."/>
            <person name="Lewis S.E."/>
            <person name="Richards S."/>
            <person name="Ashburner M."/>
            <person name="Henderson S.N."/>
            <person name="Sutton G.G."/>
            <person name="Wortman J.R."/>
            <person name="Yandell M.D."/>
            <person name="Zhang Q."/>
            <person name="Chen L.X."/>
            <person name="Brandon R.C."/>
            <person name="Rogers Y.-H.C."/>
            <person name="Blazej R.G."/>
            <person name="Champe M."/>
            <person name="Pfeiffer B.D."/>
            <person name="Wan K.H."/>
            <person name="Doyle C."/>
            <person name="Baxter E.G."/>
            <person name="Helt G."/>
            <person name="Nelson C.R."/>
            <person name="Miklos G.L.G."/>
            <person name="Abril J.F."/>
            <person name="Agbayani A."/>
            <person name="An H.-J."/>
            <person name="Andrews-Pfannkoch C."/>
            <person name="Baldwin D."/>
            <person name="Ballew R.M."/>
            <person name="Basu A."/>
            <person name="Baxendale J."/>
            <person name="Bayraktaroglu L."/>
            <person name="Beasley E.M."/>
            <person name="Beeson K.Y."/>
            <person name="Benos P.V."/>
            <person name="Berman B.P."/>
            <person name="Bhandari D."/>
            <person name="Bolshakov S."/>
            <person name="Borkova D."/>
            <person name="Botchan M.R."/>
            <person name="Bouck J."/>
            <person name="Brokstein P."/>
            <person name="Brottier P."/>
            <person name="Burtis K.C."/>
            <person name="Busam D.A."/>
            <person name="Butler H."/>
            <person name="Cadieu E."/>
            <person name="Center A."/>
            <person name="Chandra I."/>
            <person name="Cherry J.M."/>
            <person name="Cawley S."/>
            <person name="Dahlke C."/>
            <person name="Davenport L.B."/>
            <person name="Davies P."/>
            <person name="de Pablos B."/>
            <person name="Delcher A."/>
            <person name="Deng Z."/>
            <person name="Mays A.D."/>
            <person name="Dew I."/>
            <person name="Dietz S.M."/>
            <person name="Dodson K."/>
            <person name="Doup L.E."/>
            <person name="Downes M."/>
            <person name="Dugan-Rocha S."/>
            <person name="Dunkov B.C."/>
            <person name="Dunn P."/>
            <person name="Durbin K.J."/>
            <person name="Evangelista C.C."/>
            <person name="Ferraz C."/>
            <person name="Ferriera S."/>
            <person name="Fleischmann W."/>
            <person name="Fosler C."/>
            <person name="Gabrielian A.E."/>
            <person name="Garg N.S."/>
            <person name="Gelbart W.M."/>
            <person name="Glasser K."/>
            <person name="Glodek A."/>
            <person name="Gong F."/>
            <person name="Gorrell J.H."/>
            <person name="Gu Z."/>
            <person name="Guan P."/>
            <person name="Harris M."/>
            <person name="Harris N.L."/>
            <person name="Harvey D.A."/>
            <person name="Heiman T.J."/>
            <person name="Hernandez J.R."/>
            <person name="Houck J."/>
            <person name="Hostin D."/>
            <person name="Houston K.A."/>
            <person name="Howland T.J."/>
            <person name="Wei M.-H."/>
            <person name="Ibegwam C."/>
            <person name="Jalali M."/>
            <person name="Kalush F."/>
            <person name="Karpen G.H."/>
            <person name="Ke Z."/>
            <person name="Kennison J.A."/>
            <person name="Ketchum K.A."/>
            <person name="Kimmel B.E."/>
            <person name="Kodira C.D."/>
            <person name="Kraft C.L."/>
            <person name="Kravitz S."/>
            <person name="Kulp D."/>
            <person name="Lai Z."/>
            <person name="Lasko P."/>
            <person name="Lei Y."/>
            <person name="Levitsky A.A."/>
            <person name="Li J.H."/>
            <person name="Li Z."/>
            <person name="Liang Y."/>
            <person name="Lin X."/>
            <person name="Liu X."/>
            <person name="Mattei B."/>
            <person name="McIntosh T.C."/>
            <person name="McLeod M.P."/>
            <person name="McPherson D."/>
            <person name="Merkulov G."/>
            <person name="Milshina N.V."/>
            <person name="Mobarry C."/>
            <person name="Morris J."/>
            <person name="Moshrefi A."/>
            <person name="Mount S.M."/>
            <person name="Moy M."/>
            <person name="Murphy B."/>
            <person name="Murphy L."/>
            <person name="Muzny D.M."/>
            <person name="Nelson D.L."/>
            <person name="Nelson D.R."/>
            <person name="Nelson K.A."/>
            <person name="Nixon K."/>
            <person name="Nusskern D.R."/>
            <person name="Pacleb J.M."/>
            <person name="Palazzolo M."/>
            <person name="Pittman G.S."/>
            <person name="Pan S."/>
            <person name="Pollard J."/>
            <person name="Puri V."/>
            <person name="Reese M.G."/>
            <person name="Reinert K."/>
            <person name="Remington K."/>
            <person name="Saunders R.D.C."/>
            <person name="Scheeler F."/>
            <person name="Shen H."/>
            <person name="Shue B.C."/>
            <person name="Siden-Kiamos I."/>
            <person name="Simpson M."/>
            <person name="Skupski M.P."/>
            <person name="Smith T.J."/>
            <person name="Spier E."/>
            <person name="Spradling A.C."/>
            <person name="Stapleton M."/>
            <person name="Strong R."/>
            <person name="Sun E."/>
            <person name="Svirskas R."/>
            <person name="Tector C."/>
            <person name="Turner R."/>
            <person name="Venter E."/>
            <person name="Wang A.H."/>
            <person name="Wang X."/>
            <person name="Wang Z.-Y."/>
            <person name="Wassarman D.A."/>
            <person name="Weinstock G.M."/>
            <person name="Weissenbach J."/>
            <person name="Williams S.M."/>
            <person name="Woodage T."/>
            <person name="Worley K.C."/>
            <person name="Wu D."/>
            <person name="Yang S."/>
            <person name="Yao Q.A."/>
            <person name="Ye J."/>
            <person name="Yeh R.-F."/>
            <person name="Zaveri J.S."/>
            <person name="Zhan M."/>
            <person name="Zhang G."/>
            <person name="Zhao Q."/>
            <person name="Zheng L."/>
            <person name="Zheng X.H."/>
            <person name="Zhong F.N."/>
            <person name="Zhong W."/>
            <person name="Zhou X."/>
            <person name="Zhu S.C."/>
            <person name="Zhu X."/>
            <person name="Smith H.O."/>
            <person name="Gibbs R.A."/>
            <person name="Myers E.W."/>
            <person name="Rubin G.M."/>
            <person name="Venter J.C."/>
        </authorList>
    </citation>
    <scope>NUCLEOTIDE SEQUENCE [LARGE SCALE GENOMIC DNA]</scope>
    <source>
        <strain evidence="15">Berkeley</strain>
    </source>
</reference>
<reference evidence="15" key="2">
    <citation type="journal article" date="2002" name="Genome Biol.">
        <title>Annotation of the Drosophila melanogaster euchromatic genome: a systematic review.</title>
        <authorList>
            <person name="Misra S."/>
            <person name="Crosby M.A."/>
            <person name="Mungall C.J."/>
            <person name="Matthews B.B."/>
            <person name="Campbell K.S."/>
            <person name="Hradecky P."/>
            <person name="Huang Y."/>
            <person name="Kaminker J.S."/>
            <person name="Millburn G.H."/>
            <person name="Prochnik S.E."/>
            <person name="Smith C.D."/>
            <person name="Tupy J.L."/>
            <person name="Whitfield E.J."/>
            <person name="Bayraktaroglu L."/>
            <person name="Berman B.P."/>
            <person name="Bettencourt B.R."/>
            <person name="Celniker S.E."/>
            <person name="de Grey A.D.N.J."/>
            <person name="Drysdale R.A."/>
            <person name="Harris N.L."/>
            <person name="Richter J."/>
            <person name="Russo S."/>
            <person name="Schroeder A.J."/>
            <person name="Shu S.Q."/>
            <person name="Stapleton M."/>
            <person name="Yamada C."/>
            <person name="Ashburner M."/>
            <person name="Gelbart W.M."/>
            <person name="Rubin G.M."/>
            <person name="Lewis S.E."/>
        </authorList>
    </citation>
    <scope>GENOME REANNOTATION</scope>
    <source>
        <strain evidence="15">Berkeley</strain>
    </source>
</reference>
<reference evidence="13" key="3">
    <citation type="journal article" date="2002" name="Genome Biol.">
        <title>A Drosophila full-length cDNA resource.</title>
        <authorList>
            <person name="Stapleton M."/>
            <person name="Carlson J.W."/>
            <person name="Brokstein P."/>
            <person name="Yu C."/>
            <person name="Champe M."/>
            <person name="George R.A."/>
            <person name="Guarin H."/>
            <person name="Kronmiller B."/>
            <person name="Pacleb J.M."/>
            <person name="Park S."/>
            <person name="Wan K.H."/>
            <person name="Rubin G.M."/>
            <person name="Celniker S.E."/>
        </authorList>
    </citation>
    <scope>NUCLEOTIDE SEQUENCE [LARGE SCALE MRNA]</scope>
    <source>
        <strain evidence="13">Berkeley</strain>
        <tissue evidence="13">Embryo</tissue>
    </source>
</reference>
<reference evidence="12" key="4">
    <citation type="journal article" date="2011" name="Mol. Cell. Biol.">
        <title>A subset of Drosophila integrator proteins is essential for efficient U7 snRNA and spliceosomal snRNA 3'-end formation.</title>
        <authorList>
            <person name="Ezzeddine N."/>
            <person name="Chen J."/>
            <person name="Waltenspiel B."/>
            <person name="Burch B."/>
            <person name="Albrecht T."/>
            <person name="Zhuo M."/>
            <person name="Warren W.D."/>
            <person name="Marzluff W.F."/>
            <person name="Wagner E.J."/>
        </authorList>
    </citation>
    <scope>FUNCTION</scope>
</reference>
<reference evidence="12" key="5">
    <citation type="journal article" date="2012" name="RNA">
        <title>An RNAi screen identifies additional members of the Drosophila Integrator complex and a requirement for cyclin C/Cdk8 in snRNA 3'-end formation.</title>
        <authorList>
            <person name="Chen J."/>
            <person name="Ezzeddine N."/>
            <person name="Waltenspiel B."/>
            <person name="Albrecht T.R."/>
            <person name="Warren W.D."/>
            <person name="Marzluff W.F."/>
            <person name="Wagner E.J."/>
        </authorList>
    </citation>
    <scope>FUNCTION</scope>
    <scope>SUBUNIT</scope>
</reference>
<reference evidence="12" key="6">
    <citation type="journal article" date="2013" name="J. Biol. Chem.">
        <title>Functional analysis of the integrator subunit 12 identifies a microdomain that mediates activation of the Drosophila integrator complex.</title>
        <authorList>
            <person name="Chen J."/>
            <person name="Waltenspiel B."/>
            <person name="Warren W.D."/>
            <person name="Wagner E.J."/>
        </authorList>
    </citation>
    <scope>FUNCTION</scope>
    <scope>INTERACTION WITH INTS1 AND INTS9</scope>
    <scope>DOMAIN</scope>
</reference>
<reference key="7">
    <citation type="journal article" date="2019" name="Genes Dev.">
        <title>The Integrator complex cleaves nascent mRNAs to attenuate transcription.</title>
        <authorList>
            <person name="Tatomer D.C."/>
            <person name="Elrod N.D."/>
            <person name="Liang D."/>
            <person name="Xiao M.S."/>
            <person name="Jiang J.Z."/>
            <person name="Jonathan M."/>
            <person name="Huang K.L."/>
            <person name="Wagner E.J."/>
            <person name="Cherry S."/>
            <person name="Wilusz J.E."/>
        </authorList>
    </citation>
    <scope>IDENTIFICATION IN THE INTEGRATOR COMPLEX</scope>
</reference>
<reference key="8">
    <citation type="journal article" date="2020" name="Mol. Cell">
        <title>Integrator recruits protein phosphatase 2A to prevent pause release and facilitate transcription termination.</title>
        <authorList>
            <person name="Huang K.L."/>
            <person name="Jee D."/>
            <person name="Stein C.B."/>
            <person name="Elrod N.D."/>
            <person name="Henriques T."/>
            <person name="Mascibroda L.G."/>
            <person name="Baillat D."/>
            <person name="Russell W.K."/>
            <person name="Adelman K."/>
            <person name="Wagner E.J."/>
        </authorList>
    </citation>
    <scope>FUNCTION</scope>
    <scope>IDENTIFICATION IN THE INTAC COMPLEX</scope>
</reference>
<reference key="9">
    <citation type="journal article" date="2023" name="Mol. Cell">
        <title>IntS6 and the Integrator phosphatase module tune the efficiency of select premature transcription termination events.</title>
        <authorList>
            <person name="Fujiwara R."/>
            <person name="Zhai S.N."/>
            <person name="Liang D."/>
            <person name="Shah A.P."/>
            <person name="Tracey M."/>
            <person name="Ma X.K."/>
            <person name="Fields C.J."/>
            <person name="Mendoza-Figueroa M.S."/>
            <person name="Meline M.C."/>
            <person name="Tatomer D.C."/>
            <person name="Yang L."/>
            <person name="Wilusz J.E."/>
        </authorList>
    </citation>
    <scope>IDENTIFICATION IN THE INTAC COMPLEX</scope>
</reference>
<reference key="10">
    <citation type="journal article" date="2024" name="Mol. Cell">
        <title>Cytoplasmic binding partners of the Integrator endonuclease INTS11 and its paralog CPSF73 are required for their nuclear function.</title>
        <authorList>
            <person name="Lin M.H."/>
            <person name="Jensen M.K."/>
            <person name="Elrod N.D."/>
            <person name="Chu H.F."/>
            <person name="Haseley M."/>
            <person name="Beam A.C."/>
            <person name="Huang K.L."/>
            <person name="Chiang W."/>
            <person name="Russell W.K."/>
            <person name="Williams K."/>
            <person name="Proschel C."/>
            <person name="Wagner E.J."/>
            <person name="Tong L."/>
        </authorList>
    </citation>
    <scope>IDENTIFICATION IN THE INTEGRATOR COMPLEX</scope>
    <scope>SUBCELLULAR LOCATION</scope>
</reference>
<protein>
    <recommendedName>
        <fullName evidence="10">Integrator complex subunit 12</fullName>
    </recommendedName>
</protein>
<name>INT12_DROME</name>
<proteinExistence type="evidence at protein level"/>